<gene>
    <name type="primary">gmk</name>
    <name type="ordered locus">BU434</name>
</gene>
<feature type="chain" id="PRO_0000170510" description="Guanylate kinase">
    <location>
        <begin position="1"/>
        <end position="207"/>
    </location>
</feature>
<feature type="domain" description="Guanylate kinase-like">
    <location>
        <begin position="4"/>
        <end position="184"/>
    </location>
</feature>
<feature type="binding site" evidence="1">
    <location>
        <begin position="11"/>
        <end position="18"/>
    </location>
    <ligand>
        <name>ATP</name>
        <dbReference type="ChEBI" id="CHEBI:30616"/>
    </ligand>
</feature>
<name>KGUA_BUCAI</name>
<organism>
    <name type="scientific">Buchnera aphidicola subsp. Acyrthosiphon pisum (strain APS)</name>
    <name type="common">Acyrthosiphon pisum symbiotic bacterium</name>
    <dbReference type="NCBI Taxonomy" id="107806"/>
    <lineage>
        <taxon>Bacteria</taxon>
        <taxon>Pseudomonadati</taxon>
        <taxon>Pseudomonadota</taxon>
        <taxon>Gammaproteobacteria</taxon>
        <taxon>Enterobacterales</taxon>
        <taxon>Erwiniaceae</taxon>
        <taxon>Buchnera</taxon>
    </lineage>
</organism>
<accession>P57509</accession>
<keyword id="KW-0067">ATP-binding</keyword>
<keyword id="KW-0963">Cytoplasm</keyword>
<keyword id="KW-0418">Kinase</keyword>
<keyword id="KW-0547">Nucleotide-binding</keyword>
<keyword id="KW-1185">Reference proteome</keyword>
<keyword id="KW-0808">Transferase</keyword>
<comment type="function">
    <text evidence="1">Essential for recycling GMP and indirectly, cGMP.</text>
</comment>
<comment type="catalytic activity">
    <reaction>
        <text>GMP + ATP = GDP + ADP</text>
        <dbReference type="Rhea" id="RHEA:20780"/>
        <dbReference type="ChEBI" id="CHEBI:30616"/>
        <dbReference type="ChEBI" id="CHEBI:58115"/>
        <dbReference type="ChEBI" id="CHEBI:58189"/>
        <dbReference type="ChEBI" id="CHEBI:456216"/>
        <dbReference type="EC" id="2.7.4.8"/>
    </reaction>
</comment>
<comment type="subcellular location">
    <subcellularLocation>
        <location evidence="1">Cytoplasm</location>
    </subcellularLocation>
</comment>
<comment type="similarity">
    <text evidence="2">Belongs to the guanylate kinase family.</text>
</comment>
<dbReference type="EC" id="2.7.4.8"/>
<dbReference type="EMBL" id="BA000003">
    <property type="protein sequence ID" value="BAB13132.1"/>
    <property type="molecule type" value="Genomic_DNA"/>
</dbReference>
<dbReference type="RefSeq" id="NP_240246.1">
    <property type="nucleotide sequence ID" value="NC_002528.1"/>
</dbReference>
<dbReference type="RefSeq" id="WP_009874387.1">
    <property type="nucleotide sequence ID" value="NZ_AP036055.1"/>
</dbReference>
<dbReference type="SMR" id="P57509"/>
<dbReference type="STRING" id="563178.BUAP5A_427"/>
<dbReference type="EnsemblBacteria" id="BAB13132">
    <property type="protein sequence ID" value="BAB13132"/>
    <property type="gene ID" value="BAB13132"/>
</dbReference>
<dbReference type="KEGG" id="buc:BU434"/>
<dbReference type="PATRIC" id="fig|107806.10.peg.443"/>
<dbReference type="eggNOG" id="COG0194">
    <property type="taxonomic scope" value="Bacteria"/>
</dbReference>
<dbReference type="HOGENOM" id="CLU_001715_1_0_6"/>
<dbReference type="Proteomes" id="UP000001806">
    <property type="component" value="Chromosome"/>
</dbReference>
<dbReference type="GO" id="GO:0005829">
    <property type="term" value="C:cytosol"/>
    <property type="evidence" value="ECO:0007669"/>
    <property type="project" value="TreeGrafter"/>
</dbReference>
<dbReference type="GO" id="GO:0005524">
    <property type="term" value="F:ATP binding"/>
    <property type="evidence" value="ECO:0007669"/>
    <property type="project" value="UniProtKB-UniRule"/>
</dbReference>
<dbReference type="GO" id="GO:0004385">
    <property type="term" value="F:guanylate kinase activity"/>
    <property type="evidence" value="ECO:0007669"/>
    <property type="project" value="UniProtKB-UniRule"/>
</dbReference>
<dbReference type="CDD" id="cd00071">
    <property type="entry name" value="GMPK"/>
    <property type="match status" value="1"/>
</dbReference>
<dbReference type="FunFam" id="3.40.50.300:FF:000084">
    <property type="entry name" value="Guanylate kinase"/>
    <property type="match status" value="1"/>
</dbReference>
<dbReference type="FunFam" id="3.30.63.10:FF:000002">
    <property type="entry name" value="Guanylate kinase 1"/>
    <property type="match status" value="1"/>
</dbReference>
<dbReference type="Gene3D" id="3.30.63.10">
    <property type="entry name" value="Guanylate Kinase phosphate binding domain"/>
    <property type="match status" value="1"/>
</dbReference>
<dbReference type="Gene3D" id="3.40.50.300">
    <property type="entry name" value="P-loop containing nucleotide triphosphate hydrolases"/>
    <property type="match status" value="1"/>
</dbReference>
<dbReference type="HAMAP" id="MF_00328">
    <property type="entry name" value="Guanylate_kinase"/>
    <property type="match status" value="1"/>
</dbReference>
<dbReference type="InterPro" id="IPR008145">
    <property type="entry name" value="GK/Ca_channel_bsu"/>
</dbReference>
<dbReference type="InterPro" id="IPR008144">
    <property type="entry name" value="Guanylate_kin-like_dom"/>
</dbReference>
<dbReference type="InterPro" id="IPR017665">
    <property type="entry name" value="Guanylate_kinase"/>
</dbReference>
<dbReference type="InterPro" id="IPR020590">
    <property type="entry name" value="Guanylate_kinase_CS"/>
</dbReference>
<dbReference type="InterPro" id="IPR027417">
    <property type="entry name" value="P-loop_NTPase"/>
</dbReference>
<dbReference type="NCBIfam" id="TIGR03263">
    <property type="entry name" value="guanyl_kin"/>
    <property type="match status" value="1"/>
</dbReference>
<dbReference type="PANTHER" id="PTHR23117:SF13">
    <property type="entry name" value="GUANYLATE KINASE"/>
    <property type="match status" value="1"/>
</dbReference>
<dbReference type="PANTHER" id="PTHR23117">
    <property type="entry name" value="GUANYLATE KINASE-RELATED"/>
    <property type="match status" value="1"/>
</dbReference>
<dbReference type="Pfam" id="PF00625">
    <property type="entry name" value="Guanylate_kin"/>
    <property type="match status" value="1"/>
</dbReference>
<dbReference type="SMART" id="SM00072">
    <property type="entry name" value="GuKc"/>
    <property type="match status" value="1"/>
</dbReference>
<dbReference type="SUPFAM" id="SSF52540">
    <property type="entry name" value="P-loop containing nucleoside triphosphate hydrolases"/>
    <property type="match status" value="1"/>
</dbReference>
<dbReference type="PROSITE" id="PS00856">
    <property type="entry name" value="GUANYLATE_KINASE_1"/>
    <property type="match status" value="1"/>
</dbReference>
<dbReference type="PROSITE" id="PS50052">
    <property type="entry name" value="GUANYLATE_KINASE_2"/>
    <property type="match status" value="1"/>
</dbReference>
<sequence>MSEGILFIISAPSGTGKSSLIQGLLKSKTLYNTRVSISHTTRIIRPGELHGKHYYFISKKEFEIMIKQEYFLEYAKVFSNYYGTSRKYIEKMLFSGIDVFLDIDWQGAKQIKCKMPKSKSIFLLPPSKDTLYKRLRERGQDSDSVIANRMEKAVDEMQHYSEYDYLIINDDFKQAVNDLITIITAEHLCLFHQKNKHNLLISNLLKC</sequence>
<evidence type="ECO:0000250" key="1"/>
<evidence type="ECO:0000305" key="2"/>
<protein>
    <recommendedName>
        <fullName>Guanylate kinase</fullName>
        <ecNumber>2.7.4.8</ecNumber>
    </recommendedName>
    <alternativeName>
        <fullName>GMP kinase</fullName>
    </alternativeName>
</protein>
<reference key="1">
    <citation type="journal article" date="2000" name="Nature">
        <title>Genome sequence of the endocellular bacterial symbiont of aphids Buchnera sp. APS.</title>
        <authorList>
            <person name="Shigenobu S."/>
            <person name="Watanabe H."/>
            <person name="Hattori M."/>
            <person name="Sakaki Y."/>
            <person name="Ishikawa H."/>
        </authorList>
    </citation>
    <scope>NUCLEOTIDE SEQUENCE [LARGE SCALE GENOMIC DNA]</scope>
    <source>
        <strain>APS</strain>
    </source>
</reference>
<proteinExistence type="inferred from homology"/>